<gene>
    <name evidence="5" type="primary">Slc38a9</name>
</gene>
<protein>
    <recommendedName>
        <fullName evidence="4">Neutral amino acid transporter 9</fullName>
    </recommendedName>
    <alternativeName>
        <fullName evidence="5">Solute carrier family 38 member 9</fullName>
    </alternativeName>
</protein>
<accession>Q3B8Q3</accession>
<accession>Q561Z8</accession>
<accession>R9PXU2</accession>
<proteinExistence type="evidence at transcript level"/>
<keyword id="KW-0029">Amino-acid transport</keyword>
<keyword id="KW-1015">Disulfide bond</keyword>
<keyword id="KW-0967">Endosome</keyword>
<keyword id="KW-0325">Glycoprotein</keyword>
<keyword id="KW-0458">Lysosome</keyword>
<keyword id="KW-0472">Membrane</keyword>
<keyword id="KW-0479">Metal-binding</keyword>
<keyword id="KW-1185">Reference proteome</keyword>
<keyword id="KW-0915">Sodium</keyword>
<keyword id="KW-0812">Transmembrane</keyword>
<keyword id="KW-1133">Transmembrane helix</keyword>
<keyword id="KW-0813">Transport</keyword>
<dbReference type="EMBL" id="AABR06012861">
    <property type="status" value="NOT_ANNOTATED_CDS"/>
    <property type="molecule type" value="Genomic_DNA"/>
</dbReference>
<dbReference type="EMBL" id="BC092662">
    <property type="protein sequence ID" value="AAH92662.1"/>
    <property type="molecule type" value="mRNA"/>
</dbReference>
<dbReference type="EMBL" id="BC105869">
    <property type="protein sequence ID" value="AAI05870.1"/>
    <property type="molecule type" value="mRNA"/>
</dbReference>
<dbReference type="RefSeq" id="NP_001030328.1">
    <property type="nucleotide sequence ID" value="NM_001035251.1"/>
</dbReference>
<dbReference type="RefSeq" id="XP_006231991.1">
    <property type="nucleotide sequence ID" value="XM_006231929.5"/>
</dbReference>
<dbReference type="RefSeq" id="XP_006231992.1">
    <property type="nucleotide sequence ID" value="XM_006231930.5"/>
</dbReference>
<dbReference type="RefSeq" id="XP_006231993.1">
    <property type="nucleotide sequence ID" value="XM_006231931.5"/>
</dbReference>
<dbReference type="RefSeq" id="XP_006231994.1">
    <property type="nucleotide sequence ID" value="XM_006231932.4"/>
</dbReference>
<dbReference type="RefSeq" id="XP_006231995.1">
    <property type="nucleotide sequence ID" value="XM_006231933.2"/>
</dbReference>
<dbReference type="RefSeq" id="XP_063137801.1">
    <property type="nucleotide sequence ID" value="XM_063281731.1"/>
</dbReference>
<dbReference type="SMR" id="Q3B8Q3"/>
<dbReference type="FunCoup" id="Q3B8Q3">
    <property type="interactions" value="2656"/>
</dbReference>
<dbReference type="STRING" id="10116.ENSRNOP00000013218"/>
<dbReference type="GlyCosmos" id="Q3B8Q3">
    <property type="glycosylation" value="3 sites, No reported glycans"/>
</dbReference>
<dbReference type="GlyGen" id="Q3B8Q3">
    <property type="glycosylation" value="3 sites"/>
</dbReference>
<dbReference type="PhosphoSitePlus" id="Q3B8Q3"/>
<dbReference type="PaxDb" id="10116-ENSRNOP00000013218"/>
<dbReference type="Ensembl" id="ENSRNOT00000013218.7">
    <property type="protein sequence ID" value="ENSRNOP00000013218.6"/>
    <property type="gene ID" value="ENSRNOG00000009851.7"/>
</dbReference>
<dbReference type="GeneID" id="310091"/>
<dbReference type="KEGG" id="rno:310091"/>
<dbReference type="AGR" id="RGD:1311881"/>
<dbReference type="CTD" id="153129"/>
<dbReference type="RGD" id="1311881">
    <property type="gene designation" value="Slc38a9"/>
</dbReference>
<dbReference type="eggNOG" id="KOG1305">
    <property type="taxonomic scope" value="Eukaryota"/>
</dbReference>
<dbReference type="GeneTree" id="ENSGT00390000005646"/>
<dbReference type="HOGENOM" id="CLU_037564_0_0_1"/>
<dbReference type="InParanoid" id="Q3B8Q3"/>
<dbReference type="OMA" id="HWFTPTE"/>
<dbReference type="OrthoDB" id="294730at2759"/>
<dbReference type="PhylomeDB" id="Q3B8Q3"/>
<dbReference type="TreeFam" id="TF312989"/>
<dbReference type="Reactome" id="R-RNO-1632852">
    <property type="pathway name" value="Macroautophagy"/>
</dbReference>
<dbReference type="Reactome" id="R-RNO-165159">
    <property type="pathway name" value="MTOR signalling"/>
</dbReference>
<dbReference type="Reactome" id="R-RNO-166208">
    <property type="pathway name" value="mTORC1-mediated signalling"/>
</dbReference>
<dbReference type="Reactome" id="R-RNO-380972">
    <property type="pathway name" value="Energy dependent regulation of mTOR by LKB1-AMPK"/>
</dbReference>
<dbReference type="Reactome" id="R-RNO-5628897">
    <property type="pathway name" value="TP53 Regulates Metabolic Genes"/>
</dbReference>
<dbReference type="Reactome" id="R-RNO-8943724">
    <property type="pathway name" value="Regulation of PTEN gene transcription"/>
</dbReference>
<dbReference type="Reactome" id="R-RNO-9639288">
    <property type="pathway name" value="Amino acids regulate mTORC1"/>
</dbReference>
<dbReference type="PRO" id="PR:Q3B8Q3"/>
<dbReference type="Proteomes" id="UP000002494">
    <property type="component" value="Chromosome 2"/>
</dbReference>
<dbReference type="Bgee" id="ENSRNOG00000009851">
    <property type="expression patterns" value="Expressed in testis and 19 other cell types or tissues"/>
</dbReference>
<dbReference type="ExpressionAtlas" id="Q3B8Q3">
    <property type="expression patterns" value="baseline and differential"/>
</dbReference>
<dbReference type="GO" id="GO:1990877">
    <property type="term" value="C:FNIP-folliculin RagC/D GAP"/>
    <property type="evidence" value="ECO:0000266"/>
    <property type="project" value="RGD"/>
</dbReference>
<dbReference type="GO" id="GO:0005770">
    <property type="term" value="C:late endosome"/>
    <property type="evidence" value="ECO:0000250"/>
    <property type="project" value="UniProtKB"/>
</dbReference>
<dbReference type="GO" id="GO:0031902">
    <property type="term" value="C:late endosome membrane"/>
    <property type="evidence" value="ECO:0007669"/>
    <property type="project" value="UniProtKB-SubCell"/>
</dbReference>
<dbReference type="GO" id="GO:0005765">
    <property type="term" value="C:lysosomal membrane"/>
    <property type="evidence" value="ECO:0000250"/>
    <property type="project" value="UniProtKB"/>
</dbReference>
<dbReference type="GO" id="GO:0005764">
    <property type="term" value="C:lysosome"/>
    <property type="evidence" value="ECO:0000250"/>
    <property type="project" value="UniProtKB"/>
</dbReference>
<dbReference type="GO" id="GO:0071986">
    <property type="term" value="C:Ragulator complex"/>
    <property type="evidence" value="ECO:0000266"/>
    <property type="project" value="RGD"/>
</dbReference>
<dbReference type="GO" id="GO:0022853">
    <property type="term" value="F:active monoatomic ion transmembrane transporter activity"/>
    <property type="evidence" value="ECO:0007669"/>
    <property type="project" value="UniProtKB-ARBA"/>
</dbReference>
<dbReference type="GO" id="GO:0015171">
    <property type="term" value="F:amino acid transmembrane transporter activity"/>
    <property type="evidence" value="ECO:0000250"/>
    <property type="project" value="UniProtKB"/>
</dbReference>
<dbReference type="GO" id="GO:0034618">
    <property type="term" value="F:arginine binding"/>
    <property type="evidence" value="ECO:0000250"/>
    <property type="project" value="UniProtKB"/>
</dbReference>
<dbReference type="GO" id="GO:0015485">
    <property type="term" value="F:cholesterol binding"/>
    <property type="evidence" value="ECO:0000250"/>
    <property type="project" value="UniProtKB"/>
</dbReference>
<dbReference type="GO" id="GO:0005085">
    <property type="term" value="F:guanyl-nucleotide exchange factor activity"/>
    <property type="evidence" value="ECO:0000250"/>
    <property type="project" value="UniProtKB"/>
</dbReference>
<dbReference type="GO" id="GO:0022890">
    <property type="term" value="F:inorganic cation transmembrane transporter activity"/>
    <property type="evidence" value="ECO:0007669"/>
    <property type="project" value="UniProtKB-ARBA"/>
</dbReference>
<dbReference type="GO" id="GO:0015179">
    <property type="term" value="F:L-amino acid transmembrane transporter activity"/>
    <property type="evidence" value="ECO:0000318"/>
    <property type="project" value="GO_Central"/>
</dbReference>
<dbReference type="GO" id="GO:0061459">
    <property type="term" value="F:L-arginine transmembrane transporter activity"/>
    <property type="evidence" value="ECO:0000250"/>
    <property type="project" value="UniProtKB"/>
</dbReference>
<dbReference type="GO" id="GO:0015182">
    <property type="term" value="F:L-asparagine transmembrane transporter activity"/>
    <property type="evidence" value="ECO:0000250"/>
    <property type="project" value="UniProtKB"/>
</dbReference>
<dbReference type="GO" id="GO:0015186">
    <property type="term" value="F:L-glutamine transmembrane transporter activity"/>
    <property type="evidence" value="ECO:0000250"/>
    <property type="project" value="UniProtKB"/>
</dbReference>
<dbReference type="GO" id="GO:0015190">
    <property type="term" value="F:L-leucine transmembrane transporter activity"/>
    <property type="evidence" value="ECO:0000266"/>
    <property type="project" value="RGD"/>
</dbReference>
<dbReference type="GO" id="GO:0046872">
    <property type="term" value="F:metal ion binding"/>
    <property type="evidence" value="ECO:0007669"/>
    <property type="project" value="UniProtKB-KW"/>
</dbReference>
<dbReference type="GO" id="GO:0008324">
    <property type="term" value="F:monoatomic cation transmembrane transporter activity"/>
    <property type="evidence" value="ECO:0007669"/>
    <property type="project" value="UniProtKB-ARBA"/>
</dbReference>
<dbReference type="GO" id="GO:0015291">
    <property type="term" value="F:secondary active transmembrane transporter activity"/>
    <property type="evidence" value="ECO:0007669"/>
    <property type="project" value="UniProtKB-ARBA"/>
</dbReference>
<dbReference type="GO" id="GO:0032935">
    <property type="term" value="F:sterol sensor activity"/>
    <property type="evidence" value="ECO:0000250"/>
    <property type="project" value="UniProtKB"/>
</dbReference>
<dbReference type="GO" id="GO:0003333">
    <property type="term" value="P:amino acid transmembrane transport"/>
    <property type="evidence" value="ECO:0000250"/>
    <property type="project" value="UniProtKB"/>
</dbReference>
<dbReference type="GO" id="GO:0006867">
    <property type="term" value="P:asparagine transport"/>
    <property type="evidence" value="ECO:0000250"/>
    <property type="project" value="UniProtKB"/>
</dbReference>
<dbReference type="GO" id="GO:0071230">
    <property type="term" value="P:cellular response to amino acid stimulus"/>
    <property type="evidence" value="ECO:0000250"/>
    <property type="project" value="UniProtKB"/>
</dbReference>
<dbReference type="GO" id="GO:0006868">
    <property type="term" value="P:glutamine transport"/>
    <property type="evidence" value="ECO:0000250"/>
    <property type="project" value="UniProtKB"/>
</dbReference>
<dbReference type="GO" id="GO:0098662">
    <property type="term" value="P:inorganic cation transmembrane transport"/>
    <property type="evidence" value="ECO:0007669"/>
    <property type="project" value="UniProtKB-ARBA"/>
</dbReference>
<dbReference type="GO" id="GO:1903826">
    <property type="term" value="P:L-arginine transmembrane transport"/>
    <property type="evidence" value="ECO:0000250"/>
    <property type="project" value="UniProtKB"/>
</dbReference>
<dbReference type="GO" id="GO:0032008">
    <property type="term" value="P:positive regulation of TOR signaling"/>
    <property type="evidence" value="ECO:0000250"/>
    <property type="project" value="UniProtKB"/>
</dbReference>
<dbReference type="GO" id="GO:1904263">
    <property type="term" value="P:positive regulation of TORC1 signaling"/>
    <property type="evidence" value="ECO:0000250"/>
    <property type="project" value="UniProtKB"/>
</dbReference>
<dbReference type="InterPro" id="IPR013057">
    <property type="entry name" value="AA_transpt_TM"/>
</dbReference>
<dbReference type="PANTHER" id="PTHR22950">
    <property type="entry name" value="AMINO ACID TRANSPORTER"/>
    <property type="match status" value="1"/>
</dbReference>
<dbReference type="PANTHER" id="PTHR22950:SF244">
    <property type="entry name" value="NEUTRAL AMINO ACID TRANSPORTER 9"/>
    <property type="match status" value="1"/>
</dbReference>
<dbReference type="Pfam" id="PF01490">
    <property type="entry name" value="Aa_trans"/>
    <property type="match status" value="2"/>
</dbReference>
<reference key="1">
    <citation type="journal article" date="2004" name="Nature">
        <title>Genome sequence of the Brown Norway rat yields insights into mammalian evolution.</title>
        <authorList>
            <person name="Gibbs R.A."/>
            <person name="Weinstock G.M."/>
            <person name="Metzker M.L."/>
            <person name="Muzny D.M."/>
            <person name="Sodergren E.J."/>
            <person name="Scherer S."/>
            <person name="Scott G."/>
            <person name="Steffen D."/>
            <person name="Worley K.C."/>
            <person name="Burch P.E."/>
            <person name="Okwuonu G."/>
            <person name="Hines S."/>
            <person name="Lewis L."/>
            <person name="Deramo C."/>
            <person name="Delgado O."/>
            <person name="Dugan-Rocha S."/>
            <person name="Miner G."/>
            <person name="Morgan M."/>
            <person name="Hawes A."/>
            <person name="Gill R."/>
            <person name="Holt R.A."/>
            <person name="Adams M.D."/>
            <person name="Amanatides P.G."/>
            <person name="Baden-Tillson H."/>
            <person name="Barnstead M."/>
            <person name="Chin S."/>
            <person name="Evans C.A."/>
            <person name="Ferriera S."/>
            <person name="Fosler C."/>
            <person name="Glodek A."/>
            <person name="Gu Z."/>
            <person name="Jennings D."/>
            <person name="Kraft C.L."/>
            <person name="Nguyen T."/>
            <person name="Pfannkoch C.M."/>
            <person name="Sitter C."/>
            <person name="Sutton G.G."/>
            <person name="Venter J.C."/>
            <person name="Woodage T."/>
            <person name="Smith D."/>
            <person name="Lee H.-M."/>
            <person name="Gustafson E."/>
            <person name="Cahill P."/>
            <person name="Kana A."/>
            <person name="Doucette-Stamm L."/>
            <person name="Weinstock K."/>
            <person name="Fechtel K."/>
            <person name="Weiss R.B."/>
            <person name="Dunn D.M."/>
            <person name="Green E.D."/>
            <person name="Blakesley R.W."/>
            <person name="Bouffard G.G."/>
            <person name="De Jong P.J."/>
            <person name="Osoegawa K."/>
            <person name="Zhu B."/>
            <person name="Marra M."/>
            <person name="Schein J."/>
            <person name="Bosdet I."/>
            <person name="Fjell C."/>
            <person name="Jones S."/>
            <person name="Krzywinski M."/>
            <person name="Mathewson C."/>
            <person name="Siddiqui A."/>
            <person name="Wye N."/>
            <person name="McPherson J."/>
            <person name="Zhao S."/>
            <person name="Fraser C.M."/>
            <person name="Shetty J."/>
            <person name="Shatsman S."/>
            <person name="Geer K."/>
            <person name="Chen Y."/>
            <person name="Abramzon S."/>
            <person name="Nierman W.C."/>
            <person name="Havlak P.H."/>
            <person name="Chen R."/>
            <person name="Durbin K.J."/>
            <person name="Egan A."/>
            <person name="Ren Y."/>
            <person name="Song X.-Z."/>
            <person name="Li B."/>
            <person name="Liu Y."/>
            <person name="Qin X."/>
            <person name="Cawley S."/>
            <person name="Cooney A.J."/>
            <person name="D'Souza L.M."/>
            <person name="Martin K."/>
            <person name="Wu J.Q."/>
            <person name="Gonzalez-Garay M.L."/>
            <person name="Jackson A.R."/>
            <person name="Kalafus K.J."/>
            <person name="McLeod M.P."/>
            <person name="Milosavljevic A."/>
            <person name="Virk D."/>
            <person name="Volkov A."/>
            <person name="Wheeler D.A."/>
            <person name="Zhang Z."/>
            <person name="Bailey J.A."/>
            <person name="Eichler E.E."/>
            <person name="Tuzun E."/>
            <person name="Birney E."/>
            <person name="Mongin E."/>
            <person name="Ureta-Vidal A."/>
            <person name="Woodwark C."/>
            <person name="Zdobnov E."/>
            <person name="Bork P."/>
            <person name="Suyama M."/>
            <person name="Torrents D."/>
            <person name="Alexandersson M."/>
            <person name="Trask B.J."/>
            <person name="Young J.M."/>
            <person name="Huang H."/>
            <person name="Wang H."/>
            <person name="Xing H."/>
            <person name="Daniels S."/>
            <person name="Gietzen D."/>
            <person name="Schmidt J."/>
            <person name="Stevens K."/>
            <person name="Vitt U."/>
            <person name="Wingrove J."/>
            <person name="Camara F."/>
            <person name="Mar Alba M."/>
            <person name="Abril J.F."/>
            <person name="Guigo R."/>
            <person name="Smit A."/>
            <person name="Dubchak I."/>
            <person name="Rubin E.M."/>
            <person name="Couronne O."/>
            <person name="Poliakov A."/>
            <person name="Huebner N."/>
            <person name="Ganten D."/>
            <person name="Goesele C."/>
            <person name="Hummel O."/>
            <person name="Kreitler T."/>
            <person name="Lee Y.-A."/>
            <person name="Monti J."/>
            <person name="Schulz H."/>
            <person name="Zimdahl H."/>
            <person name="Himmelbauer H."/>
            <person name="Lehrach H."/>
            <person name="Jacob H.J."/>
            <person name="Bromberg S."/>
            <person name="Gullings-Handley J."/>
            <person name="Jensen-Seaman M.I."/>
            <person name="Kwitek A.E."/>
            <person name="Lazar J."/>
            <person name="Pasko D."/>
            <person name="Tonellato P.J."/>
            <person name="Twigger S."/>
            <person name="Ponting C.P."/>
            <person name="Duarte J.M."/>
            <person name="Rice S."/>
            <person name="Goodstadt L."/>
            <person name="Beatson S.A."/>
            <person name="Emes R.D."/>
            <person name="Winter E.E."/>
            <person name="Webber C."/>
            <person name="Brandt P."/>
            <person name="Nyakatura G."/>
            <person name="Adetobi M."/>
            <person name="Chiaromonte F."/>
            <person name="Elnitski L."/>
            <person name="Eswara P."/>
            <person name="Hardison R.C."/>
            <person name="Hou M."/>
            <person name="Kolbe D."/>
            <person name="Makova K."/>
            <person name="Miller W."/>
            <person name="Nekrutenko A."/>
            <person name="Riemer C."/>
            <person name="Schwartz S."/>
            <person name="Taylor J."/>
            <person name="Yang S."/>
            <person name="Zhang Y."/>
            <person name="Lindpaintner K."/>
            <person name="Andrews T.D."/>
            <person name="Caccamo M."/>
            <person name="Clamp M."/>
            <person name="Clarke L."/>
            <person name="Curwen V."/>
            <person name="Durbin R.M."/>
            <person name="Eyras E."/>
            <person name="Searle S.M."/>
            <person name="Cooper G.M."/>
            <person name="Batzoglou S."/>
            <person name="Brudno M."/>
            <person name="Sidow A."/>
            <person name="Stone E.A."/>
            <person name="Payseur B.A."/>
            <person name="Bourque G."/>
            <person name="Lopez-Otin C."/>
            <person name="Puente X.S."/>
            <person name="Chakrabarti K."/>
            <person name="Chatterji S."/>
            <person name="Dewey C."/>
            <person name="Pachter L."/>
            <person name="Bray N."/>
            <person name="Yap V.B."/>
            <person name="Caspi A."/>
            <person name="Tesler G."/>
            <person name="Pevzner P.A."/>
            <person name="Haussler D."/>
            <person name="Roskin K.M."/>
            <person name="Baertsch R."/>
            <person name="Clawson H."/>
            <person name="Furey T.S."/>
            <person name="Hinrichs A.S."/>
            <person name="Karolchik D."/>
            <person name="Kent W.J."/>
            <person name="Rosenbloom K.R."/>
            <person name="Trumbower H."/>
            <person name="Weirauch M."/>
            <person name="Cooper D.N."/>
            <person name="Stenson P.D."/>
            <person name="Ma B."/>
            <person name="Brent M."/>
            <person name="Arumugam M."/>
            <person name="Shteynberg D."/>
            <person name="Copley R.R."/>
            <person name="Taylor M.S."/>
            <person name="Riethman H."/>
            <person name="Mudunuri U."/>
            <person name="Peterson J."/>
            <person name="Guyer M."/>
            <person name="Felsenfeld A."/>
            <person name="Old S."/>
            <person name="Mockrin S."/>
            <person name="Collins F.S."/>
        </authorList>
    </citation>
    <scope>NUCLEOTIDE SEQUENCE [LARGE SCALE GENOMIC DNA]</scope>
    <scope>IDENTIFICATION</scope>
    <source>
        <strain>Brown Norway</strain>
    </source>
</reference>
<reference key="2">
    <citation type="journal article" date="2004" name="Genome Res.">
        <title>The status, quality, and expansion of the NIH full-length cDNA project: the Mammalian Gene Collection (MGC).</title>
        <authorList>
            <consortium name="The MGC Project Team"/>
        </authorList>
    </citation>
    <scope>NUCLEOTIDE SEQUENCE [LARGE SCALE MRNA]</scope>
    <source>
        <tissue>Placenta</tissue>
        <tissue>Spleen</tissue>
    </source>
</reference>
<name>S38A9_RAT</name>
<organism>
    <name type="scientific">Rattus norvegicus</name>
    <name type="common">Rat</name>
    <dbReference type="NCBI Taxonomy" id="10116"/>
    <lineage>
        <taxon>Eukaryota</taxon>
        <taxon>Metazoa</taxon>
        <taxon>Chordata</taxon>
        <taxon>Craniata</taxon>
        <taxon>Vertebrata</taxon>
        <taxon>Euteleostomi</taxon>
        <taxon>Mammalia</taxon>
        <taxon>Eutheria</taxon>
        <taxon>Euarchontoglires</taxon>
        <taxon>Glires</taxon>
        <taxon>Rodentia</taxon>
        <taxon>Myomorpha</taxon>
        <taxon>Muroidea</taxon>
        <taxon>Muridae</taxon>
        <taxon>Murinae</taxon>
        <taxon>Rattus</taxon>
    </lineage>
</organism>
<sequence>MANVDSDSRHLISEVEHEVNPGPMNIQFDSSDLRSKRPFYIEPTNIVNVNDVIQKVSDHAAAMNKRIHYYSRLTTPADKALIAPDHVVPAPEECYVYSPLGSAYKLKSYTEGYRKNTSLVTIFMIWNTMMGTSILSIPWGIKQAGFTTGMCVIVLMGLLTLYCCYRVVKSRSMIVTSDTTTWEYPDVCKHYFGSFGQWSSLLFSLVSLIGAMIVYWVLMSNFLFNTGKFIFNFIHHINDTDTVLSTNNSSPVICPSAGSGHPDNSSMIFYNSDTEVRLFERWWDKSKTVPFYLIGLLLPLLNFKSPSFFSKFNILGTVSVLYLIFIVTLKAIRLGFHLEFHWFAPTEFFVPEIRAQFPQLTGVLTLAFFIHNCIITLLKNNKNQENNVRDLCIAYMLVTLTYLYIGVLVFASFPSPPLPKDCIEQNFLDNFPSSDTLSFIARICLLFQMMTVYPLLGYLARVQLLGHIFGDIYPSIFHVLILNLIIVGAGVTMACFYPNIGGIIRYSGAACGLAFVFIYPSLIYILSQHQEERLTWPKLVFHIIIIILGLANLIAQFFM</sequence>
<feature type="chain" id="PRO_0000328842" description="Neutral amino acid transporter 9">
    <location>
        <begin position="1"/>
        <end position="559"/>
    </location>
</feature>
<feature type="topological domain" description="Cytoplasmic" evidence="4">
    <location>
        <begin position="1"/>
        <end position="118"/>
    </location>
</feature>
<feature type="transmembrane region" description="Helical; Name=1" evidence="1">
    <location>
        <begin position="119"/>
        <end position="139"/>
    </location>
</feature>
<feature type="topological domain" description="Lumenal" evidence="4">
    <location>
        <begin position="140"/>
        <end position="145"/>
    </location>
</feature>
<feature type="transmembrane region" description="Helical; Name=2" evidence="1">
    <location>
        <begin position="146"/>
        <end position="166"/>
    </location>
</feature>
<feature type="topological domain" description="Cytoplasmic" evidence="4">
    <location>
        <begin position="167"/>
        <end position="197"/>
    </location>
</feature>
<feature type="transmembrane region" description="Helical; Name=3" evidence="1">
    <location>
        <begin position="198"/>
        <end position="224"/>
    </location>
</feature>
<feature type="topological domain" description="Lumenal" evidence="4">
    <location>
        <begin position="225"/>
        <end position="281"/>
    </location>
</feature>
<feature type="transmembrane region" description="Helical; Name=4" evidence="1">
    <location>
        <begin position="282"/>
        <end position="298"/>
    </location>
</feature>
<feature type="topological domain" description="Cytoplasmic" evidence="4">
    <location>
        <begin position="299"/>
        <end position="307"/>
    </location>
</feature>
<feature type="transmembrane region" description="Helical; Name=5" evidence="1">
    <location>
        <begin position="308"/>
        <end position="332"/>
    </location>
</feature>
<feature type="topological domain" description="Lumenal" evidence="4">
    <location>
        <begin position="333"/>
        <end position="354"/>
    </location>
</feature>
<feature type="transmembrane region" description="Helical; Name=6" evidence="1">
    <location>
        <begin position="355"/>
        <end position="375"/>
    </location>
</feature>
<feature type="topological domain" description="Cytoplasmic" evidence="4">
    <location>
        <begin position="376"/>
        <end position="392"/>
    </location>
</feature>
<feature type="transmembrane region" description="Helical; Name=7" evidence="1">
    <location>
        <begin position="393"/>
        <end position="413"/>
    </location>
</feature>
<feature type="topological domain" description="Lumenal" evidence="4">
    <location>
        <begin position="414"/>
        <end position="435"/>
    </location>
</feature>
<feature type="transmembrane region" description="Helical; Name=8" evidence="1">
    <location>
        <begin position="436"/>
        <end position="456"/>
    </location>
</feature>
<feature type="topological domain" description="Cytoplasmic" evidence="4">
    <location>
        <begin position="457"/>
        <end position="477"/>
    </location>
</feature>
<feature type="transmembrane region" description="Helical; Name=9" evidence="1">
    <location>
        <begin position="478"/>
        <end position="498"/>
    </location>
</feature>
<feature type="topological domain" description="Lumenal" evidence="4">
    <location>
        <begin position="499"/>
        <end position="505"/>
    </location>
</feature>
<feature type="transmembrane region" description="Helical; Name=10" evidence="1">
    <location>
        <begin position="506"/>
        <end position="526"/>
    </location>
</feature>
<feature type="topological domain" description="Cytoplasmic" evidence="4">
    <location>
        <begin position="527"/>
        <end position="538"/>
    </location>
</feature>
<feature type="transmembrane region" description="Helical; Name=11" evidence="1">
    <location>
        <begin position="539"/>
        <end position="559"/>
    </location>
</feature>
<feature type="region of interest" description="Important for arginine binding and amino acid transport" evidence="1">
    <location>
        <begin position="128"/>
        <end position="133"/>
    </location>
</feature>
<feature type="short sequence motif" description="CARC motif" evidence="2">
    <location>
        <begin position="442"/>
        <end position="452"/>
    </location>
</feature>
<feature type="short sequence motif" description="CRAC motif" evidence="2">
    <location>
        <begin position="455"/>
        <end position="461"/>
    </location>
</feature>
<feature type="binding site" evidence="1">
    <location>
        <position position="133"/>
    </location>
    <ligand>
        <name>arginine</name>
        <dbReference type="ChEBI" id="CHEBI:32696"/>
    </ligand>
</feature>
<feature type="glycosylation site" description="N-linked (GlcNAc...) asparagine" evidence="3">
    <location>
        <position position="238"/>
    </location>
</feature>
<feature type="glycosylation site" description="N-linked (GlcNAc...) asparagine" evidence="3">
    <location>
        <position position="247"/>
    </location>
</feature>
<feature type="glycosylation site" description="N-linked (GlcNAc...) asparagine" evidence="3">
    <location>
        <position position="264"/>
    </location>
</feature>
<feature type="disulfide bond" evidence="1">
    <location>
        <begin position="254"/>
        <end position="422"/>
    </location>
</feature>
<evidence type="ECO:0000250" key="1">
    <source>
        <dbReference type="UniProtKB" id="Q08BA4"/>
    </source>
</evidence>
<evidence type="ECO:0000250" key="2">
    <source>
        <dbReference type="UniProtKB" id="Q8NBW4"/>
    </source>
</evidence>
<evidence type="ECO:0000255" key="3">
    <source>
        <dbReference type="PROSITE-ProRule" id="PRU00498"/>
    </source>
</evidence>
<evidence type="ECO:0000305" key="4"/>
<evidence type="ECO:0000312" key="5">
    <source>
        <dbReference type="RGD" id="1311881"/>
    </source>
</evidence>
<comment type="function">
    <text evidence="2">Lysosomal amino acid transporter involved in the activation of mTORC1 in response to amino acid levels. Probably acts as an amino acid sensor of the Rag GTPases and Ragulator complexes, 2 complexes involved in amino acid sensing and activation of mTORC1, a signaling complex promoting cell growth in response to growth factors, energy levels, and amino acids. Following activation by amino acids, the Ragulator and Rag GTPases function as a scaffold recruiting mTORC1 to lysosomes where it is in turn activated. SLC38A9 mediates transport of amino acids with low capacity and specificity with a slight preference for polar amino acids. Acts as an arginine sensor. Following activation by arginine binding, mediates transport of L-glutamine, leucine and tyrosine with high efficiency, and is required for the efficient utilization of these amino acids after lysosomal protein degradation. However, the transport mechanism is not well defined and the role of sodium is not clear. Can disassemble the lysosomal folliculin complex (LFC), and thereby triggers GAP activity of FLCN:FNIP2 toward RRAGC. Acts as an cholesterol sensor that conveys increases in lysosomal cholesterol, leading to lysosomal recruitment and activation of mTORC1 via the Rag GTPases. Guanine exchange factor (GEF) that, upon arginine binding, stimulates GDP release from RRAGA and therefore activates the Rag GTPase heterodimer and the mTORC1 pathway in response to nutrient sufficiency.</text>
</comment>
<comment type="catalytic activity">
    <reaction evidence="2">
        <text>L-leucine(in) = L-leucine(out)</text>
        <dbReference type="Rhea" id="RHEA:73011"/>
        <dbReference type="ChEBI" id="CHEBI:57427"/>
    </reaction>
</comment>
<comment type="catalytic activity">
    <reaction evidence="2">
        <text>L-tyrosine(in) = L-tyrosine(out)</text>
        <dbReference type="Rhea" id="RHEA:68572"/>
        <dbReference type="ChEBI" id="CHEBI:58315"/>
    </reaction>
</comment>
<comment type="catalytic activity">
    <reaction evidence="2">
        <text>L-glutamine(out) = L-glutamine(in)</text>
        <dbReference type="Rhea" id="RHEA:73419"/>
        <dbReference type="ChEBI" id="CHEBI:58359"/>
    </reaction>
</comment>
<comment type="catalytic activity">
    <reaction evidence="2">
        <text>L-asparagine(out) = L-asparagine(in)</text>
        <dbReference type="Rhea" id="RHEA:73423"/>
        <dbReference type="ChEBI" id="CHEBI:58048"/>
    </reaction>
</comment>
<comment type="subunit">
    <text evidence="2">Associated component of the Ragulator complex (composed of LAMTOR1, LAMTOR2, LAMTOR3, LAMTOR4 and LAMTOR5). Associated component of the Rag GTPases heterodimers (composed of RRAGA, RRAGB, RRAGC and RRAGD); this interaction is independent of the Ragulator complex but depends on the nucleotide loading state of the Rag GTPase heterodimer. Interacts with TM4SF5. Interacts with NPC1; this interaction inhibits cholesterol-mediated mTORC1 activation via its sterol transport activity.</text>
</comment>
<comment type="subcellular location">
    <subcellularLocation>
        <location evidence="2">Lysosome membrane</location>
        <topology evidence="1">Multi-pass membrane protein</topology>
    </subcellularLocation>
    <subcellularLocation>
        <location evidence="2">Late endosome membrane</location>
        <topology evidence="1">Multi-pass membrane protein</topology>
    </subcellularLocation>
</comment>
<comment type="domain">
    <text evidence="1 2">The cytosolic N-terminus part of the protein mediates interaction with the Ragulator complex. The cytosolic N-terminus part of the protein destabilizes the LFC and thereby triggers GAP activity of FLCN:FNIP2 toward RRAGC. The cytosolic N-terminus part of the protein mediates interaction with the Rag GTPase heterodimer in a RRAGA GDP-loaded state dependent and upon arginine binding, leading to the GDP release and SLC38A9 dissociation from the activated Rag GTPase heterodimer (By similarity). The cytosolic N-terminus part of the protein exists at least in two distinct conformations; The first is when the N-terminus is bound snugly in the arginine binding site (in the absence of arginine, low luminal arginine state) and the second is where the N-terminus is released and the substrate-binding site is occupied by arginine (in the presence of arginine, high luminal arginine state) (By similarity).</text>
</comment>
<comment type="domain">
    <text evidence="2">The CARC and CRAC motifs mediate binding to cholesterol.</text>
</comment>
<comment type="PTM">
    <text evidence="2">Glycosylated.</text>
</comment>
<comment type="similarity">
    <text evidence="4">Belongs to the amino acid/polyamine transporter 2 family. SLC38A9 subfamily.</text>
</comment>